<reference key="1">
    <citation type="submission" date="2004-11" db="EMBL/GenBank/DDBJ databases">
        <authorList>
            <consortium name="The German cDNA consortium"/>
        </authorList>
    </citation>
    <scope>NUCLEOTIDE SEQUENCE [LARGE SCALE MRNA]</scope>
    <source>
        <tissue>Brain cortex</tissue>
    </source>
</reference>
<evidence type="ECO:0000250" key="1">
    <source>
        <dbReference type="UniProtKB" id="A2APB8"/>
    </source>
</evidence>
<evidence type="ECO:0000250" key="2">
    <source>
        <dbReference type="UniProtKB" id="Q9ULW0"/>
    </source>
</evidence>
<evidence type="ECO:0000256" key="3">
    <source>
        <dbReference type="SAM" id="MobiDB-lite"/>
    </source>
</evidence>
<evidence type="ECO:0000305" key="4"/>
<keyword id="KW-0007">Acetylation</keyword>
<keyword id="KW-0053">Apoptosis</keyword>
<keyword id="KW-0131">Cell cycle</keyword>
<keyword id="KW-0132">Cell division</keyword>
<keyword id="KW-0963">Cytoplasm</keyword>
<keyword id="KW-0206">Cytoskeleton</keyword>
<keyword id="KW-1017">Isopeptide bond</keyword>
<keyword id="KW-0493">Microtubule</keyword>
<keyword id="KW-0498">Mitosis</keyword>
<keyword id="KW-0539">Nucleus</keyword>
<keyword id="KW-0597">Phosphoprotein</keyword>
<keyword id="KW-1185">Reference proteome</keyword>
<keyword id="KW-0832">Ubl conjugation</keyword>
<organism>
    <name type="scientific">Pongo abelii</name>
    <name type="common">Sumatran orangutan</name>
    <name type="synonym">Pongo pygmaeus abelii</name>
    <dbReference type="NCBI Taxonomy" id="9601"/>
    <lineage>
        <taxon>Eukaryota</taxon>
        <taxon>Metazoa</taxon>
        <taxon>Chordata</taxon>
        <taxon>Craniata</taxon>
        <taxon>Vertebrata</taxon>
        <taxon>Euteleostomi</taxon>
        <taxon>Mammalia</taxon>
        <taxon>Eutheria</taxon>
        <taxon>Euarchontoglires</taxon>
        <taxon>Primates</taxon>
        <taxon>Haplorrhini</taxon>
        <taxon>Catarrhini</taxon>
        <taxon>Hominidae</taxon>
        <taxon>Pongo</taxon>
    </lineage>
</organism>
<accession>Q5RAF2</accession>
<gene>
    <name type="primary">TPX2</name>
</gene>
<dbReference type="EMBL" id="CR859065">
    <property type="protein sequence ID" value="CAH91258.1"/>
    <property type="molecule type" value="mRNA"/>
</dbReference>
<dbReference type="RefSeq" id="NP_001125744.1">
    <property type="nucleotide sequence ID" value="NM_001132272.2"/>
</dbReference>
<dbReference type="SMR" id="Q5RAF2"/>
<dbReference type="STRING" id="9601.ENSPPYP00000012165"/>
<dbReference type="GeneID" id="100172669"/>
<dbReference type="KEGG" id="pon:100172669"/>
<dbReference type="CTD" id="22974"/>
<dbReference type="eggNOG" id="ENOG502QVQS">
    <property type="taxonomic scope" value="Eukaryota"/>
</dbReference>
<dbReference type="InParanoid" id="Q5RAF2"/>
<dbReference type="OrthoDB" id="1684416at2759"/>
<dbReference type="Proteomes" id="UP000001595">
    <property type="component" value="Unplaced"/>
</dbReference>
<dbReference type="GO" id="GO:0005737">
    <property type="term" value="C:cytoplasm"/>
    <property type="evidence" value="ECO:0007669"/>
    <property type="project" value="UniProtKB-KW"/>
</dbReference>
<dbReference type="GO" id="GO:0005874">
    <property type="term" value="C:microtubule"/>
    <property type="evidence" value="ECO:0007669"/>
    <property type="project" value="UniProtKB-KW"/>
</dbReference>
<dbReference type="GO" id="GO:0005634">
    <property type="term" value="C:nucleus"/>
    <property type="evidence" value="ECO:0007669"/>
    <property type="project" value="UniProtKB-SubCell"/>
</dbReference>
<dbReference type="GO" id="GO:0005819">
    <property type="term" value="C:spindle"/>
    <property type="evidence" value="ECO:0000250"/>
    <property type="project" value="UniProtKB"/>
</dbReference>
<dbReference type="GO" id="GO:0000922">
    <property type="term" value="C:spindle pole"/>
    <property type="evidence" value="ECO:0007669"/>
    <property type="project" value="UniProtKB-SubCell"/>
</dbReference>
<dbReference type="GO" id="GO:0061676">
    <property type="term" value="F:importin-alpha family protein binding"/>
    <property type="evidence" value="ECO:0000250"/>
    <property type="project" value="UniProtKB"/>
</dbReference>
<dbReference type="GO" id="GO:0006915">
    <property type="term" value="P:apoptotic process"/>
    <property type="evidence" value="ECO:0007669"/>
    <property type="project" value="UniProtKB-KW"/>
</dbReference>
<dbReference type="GO" id="GO:0051301">
    <property type="term" value="P:cell division"/>
    <property type="evidence" value="ECO:0007669"/>
    <property type="project" value="UniProtKB-KW"/>
</dbReference>
<dbReference type="GO" id="GO:0090307">
    <property type="term" value="P:mitotic spindle assembly"/>
    <property type="evidence" value="ECO:0000250"/>
    <property type="project" value="UniProtKB"/>
</dbReference>
<dbReference type="GO" id="GO:0060236">
    <property type="term" value="P:regulation of mitotic spindle organization"/>
    <property type="evidence" value="ECO:0007669"/>
    <property type="project" value="InterPro"/>
</dbReference>
<dbReference type="InterPro" id="IPR015128">
    <property type="entry name" value="Aurora-A-bd"/>
</dbReference>
<dbReference type="InterPro" id="IPR027329">
    <property type="entry name" value="TPX2_C"/>
</dbReference>
<dbReference type="InterPro" id="IPR027330">
    <property type="entry name" value="TPX2_central_dom"/>
</dbReference>
<dbReference type="InterPro" id="IPR009675">
    <property type="entry name" value="TPX2_fam"/>
</dbReference>
<dbReference type="PANTHER" id="PTHR14326">
    <property type="entry name" value="TARGETING PROTEIN FOR XKLP2"/>
    <property type="match status" value="1"/>
</dbReference>
<dbReference type="PANTHER" id="PTHR14326:SF44">
    <property type="entry name" value="TARGETING PROTEIN FOR XKLP2"/>
    <property type="match status" value="1"/>
</dbReference>
<dbReference type="Pfam" id="PF09041">
    <property type="entry name" value="Aurora-A_bind"/>
    <property type="match status" value="1"/>
</dbReference>
<dbReference type="Pfam" id="PF06886">
    <property type="entry name" value="TPX2"/>
    <property type="match status" value="2"/>
</dbReference>
<dbReference type="Pfam" id="PF12214">
    <property type="entry name" value="TPX2_importin"/>
    <property type="match status" value="1"/>
</dbReference>
<name>TPX2_PONAB</name>
<sequence>MSQVKSSYSYDAPSDFINFSSLDDEGDTQNIDSWFEEKANLENKLLGKSGTGGLFQGKTPLRKANLQQAIVTPLKPVDNTYYKEAEKENLVEQSIPSNACSSLEVEAAISRKTPAQPQRRSLRLSAQKDLKQKEKHNVKMKAKRCATPVIIDEILPSKKMKVSNKKKPEEEGSAHRDTSEKNASSPEKAKGRHTVPCMPPAKQKVLKSTEEQELEKSMKMQQEVVEMRKKNEEFKKLALAGIGQPVKKSVSQVTKSIDFHFRTDERIKQHPKNQEEYKEVNFTSELRKHPSSPARVTKGCTVVKPFNLSQGKKRTFDETVSTYVPLAQQVEDFHKRTPNRYHLRSKKDDINLLPSKSSVTKIGRDPQTPVLQTKYRARPVTCKSTAELEAEELEKLQQYKFKARELDPRILEGGPILPKKPPVKPPTEPIGFDLEIEKRIQERESKKKSEDEHFEFHSRPCPTKILEDVVGVPEKKVLPITVPKSPAFALKNRIRMPTEEDEEEDEPVVIKAQPVPHYGVPFKPQIPEARTVEICPFSFDSRDKERQLQKEKKIKELQKGEVPKFKALPLPHFDTINLPEKKVKNVTQIEPFCLETDRGGALKAQTWKHQLEEELRQQKEAACFKARPNTVISQEPFVPKKEKKSVAVQEPFQLATEKRAKERQELEKRMAEVEAQKAQQLEEARQQEEEQKKEELARLRRELVHKANPIRKYQGLEIKSSDQPLTVPVSPKFSTRFHC</sequence>
<feature type="chain" id="PRO_0000393113" description="Targeting protein for Xklp2">
    <location>
        <begin position="1"/>
        <end position="739"/>
    </location>
</feature>
<feature type="region of interest" description="Disordered" evidence="3">
    <location>
        <begin position="110"/>
        <end position="143"/>
    </location>
</feature>
<feature type="region of interest" description="Disordered" evidence="3">
    <location>
        <begin position="156"/>
        <end position="219"/>
    </location>
</feature>
<feature type="region of interest" description="Disordered" evidence="3">
    <location>
        <begin position="347"/>
        <end position="374"/>
    </location>
</feature>
<feature type="region of interest" description="Disordered" evidence="3">
    <location>
        <begin position="411"/>
        <end position="431"/>
    </location>
</feature>
<feature type="region of interest" description="Disordered" evidence="3">
    <location>
        <begin position="658"/>
        <end position="694"/>
    </location>
</feature>
<feature type="compositionally biased region" description="Basic and acidic residues" evidence="3">
    <location>
        <begin position="126"/>
        <end position="137"/>
    </location>
</feature>
<feature type="compositionally biased region" description="Basic and acidic residues" evidence="3">
    <location>
        <begin position="166"/>
        <end position="180"/>
    </location>
</feature>
<feature type="compositionally biased region" description="Basic and acidic residues" evidence="3">
    <location>
        <begin position="207"/>
        <end position="218"/>
    </location>
</feature>
<feature type="compositionally biased region" description="Pro residues" evidence="3">
    <location>
        <begin position="418"/>
        <end position="428"/>
    </location>
</feature>
<feature type="modified residue" description="Phosphothreonine" evidence="2">
    <location>
        <position position="59"/>
    </location>
</feature>
<feature type="modified residue" description="Phosphothreonine" evidence="2">
    <location>
        <position position="72"/>
    </location>
</feature>
<feature type="modified residue" description="Phosphoserine" evidence="2">
    <location>
        <position position="121"/>
    </location>
</feature>
<feature type="modified residue" description="Phosphoserine" evidence="2">
    <location>
        <position position="125"/>
    </location>
</feature>
<feature type="modified residue" description="N6-acetyllysine" evidence="1">
    <location>
        <position position="128"/>
    </location>
</feature>
<feature type="modified residue" description="Phosphothreonine" evidence="2">
    <location>
        <position position="147"/>
    </location>
</feature>
<feature type="modified residue" description="Phosphoserine" evidence="2">
    <location>
        <position position="256"/>
    </location>
</feature>
<feature type="modified residue" description="Phosphoserine" evidence="2">
    <location>
        <position position="291"/>
    </location>
</feature>
<feature type="modified residue" description="Phosphoserine" evidence="2">
    <location>
        <position position="292"/>
    </location>
</feature>
<feature type="modified residue" description="N6-acetyllysine" evidence="2">
    <location>
        <position position="304"/>
    </location>
</feature>
<feature type="modified residue" description="Phosphoserine" evidence="2">
    <location>
        <position position="309"/>
    </location>
</feature>
<feature type="modified residue" description="Phosphothreonine" evidence="2">
    <location>
        <position position="337"/>
    </location>
</feature>
<feature type="modified residue" description="Phosphoserine" evidence="2">
    <location>
        <position position="358"/>
    </location>
</feature>
<feature type="modified residue" description="Phosphothreonine" evidence="2">
    <location>
        <position position="368"/>
    </location>
</feature>
<feature type="modified residue" description="N6-acetyllysine" evidence="1">
    <location>
        <position position="374"/>
    </location>
</feature>
<feature type="modified residue" description="Phosphoserine" evidence="2">
    <location>
        <position position="485"/>
    </location>
</feature>
<feature type="modified residue" description="Phosphothreonine" evidence="2">
    <location>
        <position position="498"/>
    </location>
</feature>
<feature type="modified residue" description="Phosphoserine" evidence="2">
    <location>
        <position position="730"/>
    </location>
</feature>
<feature type="cross-link" description="Glycyl lysine isopeptide (Lys-Gly) (interchain with G-Cter in SUMO2)" evidence="2">
    <location>
        <position position="476"/>
    </location>
</feature>
<feature type="cross-link" description="Glycyl lysine isopeptide (Lys-Gly) (interchain with G-Cter in SUMO2)" evidence="2">
    <location>
        <position position="640"/>
    </location>
</feature>
<feature type="cross-link" description="Glycyl lysine isopeptide (Lys-Gly) (interchain with G-Cter in SUMO2)" evidence="2">
    <location>
        <position position="732"/>
    </location>
</feature>
<comment type="function">
    <text evidence="2">Spindle assembly factor required for normal assembly of mitotic spindles. Required for normal assembly of microtubules during apoptosis. Required for chromatin and/or kinetochore dependent microtubule nucleation. Mediates AURKA localization to spindle microtubules. Activates AURKA by promoting its autophosphorylation at 'Thr-288' and protects this residue against dephosphorylation. TPX2 is inactivated upon binding to importin-alpha. At the onset of mitosis, GOLGA2 interacts with importin-alpha, liberating TPX2 from importin-alpha, allowing TPX2 to activate AURKA kinase and stimulate local microtubule nucleation.</text>
</comment>
<comment type="subunit">
    <text evidence="1 2">Interacts with AURKA (By similarity). Interacts with importin-alpha; leading to inactivate TPX2 (By similarity). Interacts with HNRNPU; this interaction recruits HNRNPU to spindle microtubules (MTs) (By similarity). Interacts with BCL2L10 (By similarity). Interacts with KIF11 (By similarity).</text>
</comment>
<comment type="subcellular location">
    <subcellularLocation>
        <location evidence="2">Nucleus</location>
    </subcellularLocation>
    <subcellularLocation>
        <location evidence="2">Cytoplasm</location>
        <location evidence="2">Cytoskeleton</location>
        <location evidence="2">Spindle</location>
    </subcellularLocation>
    <subcellularLocation>
        <location evidence="2">Cytoplasm</location>
        <location evidence="2">Cytoskeleton</location>
        <location evidence="2">Spindle pole</location>
    </subcellularLocation>
    <text evidence="2">During mitosis it is strictly associated with the spindle pole and with the mitotic spindle, whereas during S and G2, it is diffusely distributed throughout the nucleus. Is released from the nucleus in apoptotic cells and is detected on apoptotic microtubules.</text>
</comment>
<comment type="similarity">
    <text evidence="4">Belongs to the TPX2 family.</text>
</comment>
<protein>
    <recommendedName>
        <fullName>Targeting protein for Xklp2</fullName>
    </recommendedName>
</protein>
<proteinExistence type="evidence at transcript level"/>